<protein>
    <recommendedName>
        <fullName evidence="6">Iodate reductase subunit IdrB</fullName>
        <ecNumber evidence="7">1.-.-.-</ecNumber>
    </recommendedName>
</protein>
<feature type="signal peptide" description="Tat-type signal" evidence="3">
    <location>
        <begin position="1"/>
        <end position="46"/>
    </location>
</feature>
<feature type="chain" id="PRO_0000455406" description="Iodate reductase subunit IdrB" evidence="3">
    <location>
        <begin position="47"/>
        <end position="185"/>
    </location>
</feature>
<feature type="domain" description="Rieske" evidence="2">
    <location>
        <begin position="69"/>
        <end position="168"/>
    </location>
</feature>
<feature type="binding site" evidence="2">
    <location>
        <position position="109"/>
    </location>
    <ligand>
        <name>[2Fe-2S] cluster</name>
        <dbReference type="ChEBI" id="CHEBI:190135"/>
    </ligand>
</feature>
<feature type="binding site" evidence="2">
    <location>
        <position position="111"/>
    </location>
    <ligand>
        <name>[2Fe-2S] cluster</name>
        <dbReference type="ChEBI" id="CHEBI:190135"/>
    </ligand>
</feature>
<feature type="binding site" evidence="2">
    <location>
        <position position="130"/>
    </location>
    <ligand>
        <name>[2Fe-2S] cluster</name>
        <dbReference type="ChEBI" id="CHEBI:190135"/>
    </ligand>
</feature>
<feature type="binding site" evidence="2">
    <location>
        <position position="133"/>
    </location>
    <ligand>
        <name>[2Fe-2S] cluster</name>
        <dbReference type="ChEBI" id="CHEBI:190135"/>
    </ligand>
</feature>
<keyword id="KW-0001">2Fe-2S</keyword>
<keyword id="KW-0408">Iron</keyword>
<keyword id="KW-0411">Iron-sulfur</keyword>
<keyword id="KW-0479">Metal-binding</keyword>
<keyword id="KW-0560">Oxidoreductase</keyword>
<keyword id="KW-0574">Periplasm</keyword>
<keyword id="KW-1185">Reference proteome</keyword>
<keyword id="KW-0732">Signal</keyword>
<evidence type="ECO:0000250" key="1">
    <source>
        <dbReference type="UniProtKB" id="A0A391NZA8"/>
    </source>
</evidence>
<evidence type="ECO:0000255" key="2">
    <source>
        <dbReference type="PROSITE-ProRule" id="PRU00628"/>
    </source>
</evidence>
<evidence type="ECO:0000255" key="3">
    <source>
        <dbReference type="PROSITE-ProRule" id="PRU00648"/>
    </source>
</evidence>
<evidence type="ECO:0000269" key="4">
    <source>
    </source>
</evidence>
<evidence type="ECO:0000303" key="5">
    <source>
    </source>
</evidence>
<evidence type="ECO:0000305" key="6"/>
<evidence type="ECO:0000305" key="7">
    <source>
    </source>
</evidence>
<evidence type="ECO:0000312" key="8">
    <source>
        <dbReference type="EMBL" id="MBT0960285.1"/>
    </source>
</evidence>
<dbReference type="EC" id="1.-.-.-" evidence="7"/>
<dbReference type="EMBL" id="JAEKFT010000003">
    <property type="protein sequence ID" value="MBT0960285.1"/>
    <property type="molecule type" value="Genomic_DNA"/>
</dbReference>
<dbReference type="RefSeq" id="WP_214360037.1">
    <property type="nucleotide sequence ID" value="NZ_JAEKFT010000003.1"/>
</dbReference>
<dbReference type="SMR" id="P0DV67"/>
<dbReference type="Proteomes" id="UP000694660">
    <property type="component" value="Unassembled WGS sequence"/>
</dbReference>
<dbReference type="GO" id="GO:0042597">
    <property type="term" value="C:periplasmic space"/>
    <property type="evidence" value="ECO:0007669"/>
    <property type="project" value="UniProtKB-SubCell"/>
</dbReference>
<dbReference type="GO" id="GO:0051537">
    <property type="term" value="F:2 iron, 2 sulfur cluster binding"/>
    <property type="evidence" value="ECO:0007669"/>
    <property type="project" value="UniProtKB-KW"/>
</dbReference>
<dbReference type="GO" id="GO:0046872">
    <property type="term" value="F:metal ion binding"/>
    <property type="evidence" value="ECO:0007669"/>
    <property type="project" value="UniProtKB-KW"/>
</dbReference>
<dbReference type="GO" id="GO:0016491">
    <property type="term" value="F:oxidoreductase activity"/>
    <property type="evidence" value="ECO:0007669"/>
    <property type="project" value="UniProtKB-KW"/>
</dbReference>
<dbReference type="Gene3D" id="2.102.10.10">
    <property type="entry name" value="Rieske [2Fe-2S] iron-sulphur domain"/>
    <property type="match status" value="1"/>
</dbReference>
<dbReference type="InterPro" id="IPR014067">
    <property type="entry name" value="AioB/IdrB_ssu"/>
</dbReference>
<dbReference type="InterPro" id="IPR017941">
    <property type="entry name" value="Rieske_2Fe-2S"/>
</dbReference>
<dbReference type="InterPro" id="IPR036922">
    <property type="entry name" value="Rieske_2Fe-2S_sf"/>
</dbReference>
<dbReference type="InterPro" id="IPR006311">
    <property type="entry name" value="TAT_signal"/>
</dbReference>
<dbReference type="NCBIfam" id="TIGR02694">
    <property type="entry name" value="arsenite_ox_S"/>
    <property type="match status" value="1"/>
</dbReference>
<dbReference type="Pfam" id="PF00355">
    <property type="entry name" value="Rieske"/>
    <property type="match status" value="1"/>
</dbReference>
<dbReference type="SUPFAM" id="SSF50022">
    <property type="entry name" value="ISP domain"/>
    <property type="match status" value="1"/>
</dbReference>
<dbReference type="PROSITE" id="PS51296">
    <property type="entry name" value="RIESKE"/>
    <property type="match status" value="1"/>
</dbReference>
<dbReference type="PROSITE" id="PS51318">
    <property type="entry name" value="TAT"/>
    <property type="match status" value="1"/>
</dbReference>
<name>IDRB_DENI1</name>
<accession>P0DV67</accession>
<accession>A0A944D5D0</accession>
<comment type="function">
    <text evidence="4">Involved in iodate respiration (PubMed:34215855). May accept electrons from cytochrome c551, and catalyze the reduction of iodate (IO(3)(-)) to produce the chemically unstable intermediate hypoiodous acid (HIO). This intermediate then undergoes abiotic disproportionation to yield two molecules of iodide (I(-)) and one molecule of iodate. The resultant iodate subsequently cycles back into the reductive pathway (PubMed:34215855). The initial reduction of iodate may inadvertently produce low levels of incidental toxic H(2)O(2), which is detoxified by IdrP1 and IdrP2 (PubMed:34215855).</text>
</comment>
<comment type="cofactor">
    <cofactor evidence="2">
        <name>[2Fe-2S] cluster</name>
        <dbReference type="ChEBI" id="CHEBI:190135"/>
    </cofactor>
    <text evidence="2">Binds 1 [2Fe-2S] cluster per subunit.</text>
</comment>
<comment type="subunit">
    <text evidence="7">The iodate reductase (Idr) complex is composed of a molybdopterin-dependent iodate reductase (IdrA and IdrB subunits) and two associated peroxidases (IdrP1 and IdrP2).</text>
</comment>
<comment type="subcellular location">
    <subcellularLocation>
        <location evidence="1">Periplasm</location>
    </subcellularLocation>
</comment>
<comment type="PTM">
    <text evidence="3">Predicted to be exported by the Tat system. The position of the signal peptide cleavage has not been experimentally proven.</text>
</comment>
<comment type="similarity">
    <text evidence="6">Belongs to the AOX family.</text>
</comment>
<proteinExistence type="evidence at protein level"/>
<organism>
    <name type="scientific">Denitromonas iodatirespirans</name>
    <dbReference type="NCBI Taxonomy" id="2795389"/>
    <lineage>
        <taxon>Bacteria</taxon>
        <taxon>Pseudomonadati</taxon>
        <taxon>Pseudomonadota</taxon>
        <taxon>Betaproteobacteria</taxon>
        <taxon>Rhodocyclales</taxon>
        <taxon>Zoogloeaceae</taxon>
        <taxon>Denitromonas</taxon>
    </lineage>
</organism>
<sequence>MTTHPIHLHHDDPAHGGERACMSRRSFLLAGGAMVTLASLPGTAVAALKALKADYPAVKIGKLSRLKTGEPLEFAYPYPDVNNILVKLGAEAGGGVGPQADVVAFNQQCTHMGGPLQGTYKAKHQALGPCPLHLTTFDLTRHGMVISGHATESLPQIVLEVRGDDIYAVGVQGLIYGYSSNRAGR</sequence>
<gene>
    <name evidence="5" type="primary">idrB</name>
    <name evidence="8" type="ORF">I8J34_03780</name>
</gene>
<reference key="1">
    <citation type="journal article" date="2022" name="ISME J.">
        <title>Genetic and phylogenetic analysis of dissimilatory iodate-reducing bacteria identifies potential niches across the world's oceans.</title>
        <authorList>
            <person name="Reyes-Umana V."/>
            <person name="Henning Z."/>
            <person name="Lee K."/>
            <person name="Barnum T.P."/>
            <person name="Coates J.D."/>
        </authorList>
    </citation>
    <scope>NUCLEOTIDE SEQUENCE [LARGE SCALE GENOMIC DNA]</scope>
    <scope>FUNCTION</scope>
    <scope>SUBUNIT</scope>
    <source>
        <strain>ATCC TSD-242 / DSM 113304 / IR12</strain>
    </source>
</reference>